<proteinExistence type="inferred from homology"/>
<sequence length="313" mass="35353">MKKLNIIFAGTPDISAQVLKDLYKSQHNIQAVLTQPDRAKGRGKKVQFSPVKEVALANHTPVFQPLSFKKNPEVLEQIKQLKPDVIVVIAYGIIVPQEFLDIPRYGCLNIHVSLLPKWRGAAPIQRAIQAGDTKTGVCIMQMDAGLDTGDILNTLEIEIQETDTSQTLHDKFAKLSIKPLLETLEKIEIIKPEPQQGEPTYAHKITKQEGLIDFTKSAWRISCHIRAFTPWPGAYFILDDEAIKVGEFEILYQNTDNRKAGTIIDIYRSGFDIATSDKIIRFRQLQFPNKKMLNIVDILNGKDLDKYIGYKLG</sequence>
<organism>
    <name type="scientific">Francisella tularensis subsp. holarctica (strain OSU18)</name>
    <dbReference type="NCBI Taxonomy" id="393011"/>
    <lineage>
        <taxon>Bacteria</taxon>
        <taxon>Pseudomonadati</taxon>
        <taxon>Pseudomonadota</taxon>
        <taxon>Gammaproteobacteria</taxon>
        <taxon>Thiotrichales</taxon>
        <taxon>Francisellaceae</taxon>
        <taxon>Francisella</taxon>
    </lineage>
</organism>
<protein>
    <recommendedName>
        <fullName evidence="1">Methionyl-tRNA formyltransferase</fullName>
        <ecNumber evidence="1">2.1.2.9</ecNumber>
    </recommendedName>
</protein>
<accession>Q0BLC5</accession>
<keyword id="KW-0648">Protein biosynthesis</keyword>
<keyword id="KW-0808">Transferase</keyword>
<gene>
    <name evidence="1" type="primary">fmt</name>
    <name type="ordered locus">FTH_1257</name>
</gene>
<feature type="chain" id="PRO_1000020067" description="Methionyl-tRNA formyltransferase">
    <location>
        <begin position="1"/>
        <end position="313"/>
    </location>
</feature>
<feature type="binding site" evidence="1">
    <location>
        <begin position="113"/>
        <end position="116"/>
    </location>
    <ligand>
        <name>(6S)-5,6,7,8-tetrahydrofolate</name>
        <dbReference type="ChEBI" id="CHEBI:57453"/>
    </ligand>
</feature>
<reference key="1">
    <citation type="journal article" date="2006" name="J. Bacteriol.">
        <title>Chromosome rearrangement and diversification of Francisella tularensis revealed by the type B (OSU18) genome sequence.</title>
        <authorList>
            <person name="Petrosino J.F."/>
            <person name="Xiang Q."/>
            <person name="Karpathy S.E."/>
            <person name="Jiang H."/>
            <person name="Yerrapragada S."/>
            <person name="Liu Y."/>
            <person name="Gioia J."/>
            <person name="Hemphill L."/>
            <person name="Gonzalez A."/>
            <person name="Raghavan T.M."/>
            <person name="Uzman A."/>
            <person name="Fox G.E."/>
            <person name="Highlander S."/>
            <person name="Reichard M."/>
            <person name="Morton R.J."/>
            <person name="Clinkenbeard K.D."/>
            <person name="Weinstock G.M."/>
        </authorList>
    </citation>
    <scope>NUCLEOTIDE SEQUENCE [LARGE SCALE GENOMIC DNA]</scope>
    <source>
        <strain>OSU18</strain>
    </source>
</reference>
<evidence type="ECO:0000255" key="1">
    <source>
        <dbReference type="HAMAP-Rule" id="MF_00182"/>
    </source>
</evidence>
<dbReference type="EC" id="2.1.2.9" evidence="1"/>
<dbReference type="EMBL" id="CP000437">
    <property type="protein sequence ID" value="ABI83109.1"/>
    <property type="molecule type" value="Genomic_DNA"/>
</dbReference>
<dbReference type="RefSeq" id="WP_003016443.1">
    <property type="nucleotide sequence ID" value="NC_017463.1"/>
</dbReference>
<dbReference type="SMR" id="Q0BLC5"/>
<dbReference type="KEGG" id="fth:FTH_1257"/>
<dbReference type="GO" id="GO:0005829">
    <property type="term" value="C:cytosol"/>
    <property type="evidence" value="ECO:0007669"/>
    <property type="project" value="TreeGrafter"/>
</dbReference>
<dbReference type="GO" id="GO:0004479">
    <property type="term" value="F:methionyl-tRNA formyltransferase activity"/>
    <property type="evidence" value="ECO:0007669"/>
    <property type="project" value="UniProtKB-UniRule"/>
</dbReference>
<dbReference type="CDD" id="cd08646">
    <property type="entry name" value="FMT_core_Met-tRNA-FMT_N"/>
    <property type="match status" value="1"/>
</dbReference>
<dbReference type="CDD" id="cd08704">
    <property type="entry name" value="Met_tRNA_FMT_C"/>
    <property type="match status" value="1"/>
</dbReference>
<dbReference type="Gene3D" id="3.40.50.12230">
    <property type="match status" value="1"/>
</dbReference>
<dbReference type="HAMAP" id="MF_00182">
    <property type="entry name" value="Formyl_trans"/>
    <property type="match status" value="1"/>
</dbReference>
<dbReference type="InterPro" id="IPR005794">
    <property type="entry name" value="Fmt"/>
</dbReference>
<dbReference type="InterPro" id="IPR005793">
    <property type="entry name" value="Formyl_trans_C"/>
</dbReference>
<dbReference type="InterPro" id="IPR002376">
    <property type="entry name" value="Formyl_transf_N"/>
</dbReference>
<dbReference type="InterPro" id="IPR036477">
    <property type="entry name" value="Formyl_transf_N_sf"/>
</dbReference>
<dbReference type="InterPro" id="IPR011034">
    <property type="entry name" value="Formyl_transferase-like_C_sf"/>
</dbReference>
<dbReference type="InterPro" id="IPR001555">
    <property type="entry name" value="GART_AS"/>
</dbReference>
<dbReference type="InterPro" id="IPR044135">
    <property type="entry name" value="Met-tRNA-FMT_C"/>
</dbReference>
<dbReference type="InterPro" id="IPR041711">
    <property type="entry name" value="Met-tRNA-FMT_N"/>
</dbReference>
<dbReference type="NCBIfam" id="TIGR00460">
    <property type="entry name" value="fmt"/>
    <property type="match status" value="1"/>
</dbReference>
<dbReference type="PANTHER" id="PTHR11138">
    <property type="entry name" value="METHIONYL-TRNA FORMYLTRANSFERASE"/>
    <property type="match status" value="1"/>
</dbReference>
<dbReference type="PANTHER" id="PTHR11138:SF5">
    <property type="entry name" value="METHIONYL-TRNA FORMYLTRANSFERASE, MITOCHONDRIAL"/>
    <property type="match status" value="1"/>
</dbReference>
<dbReference type="Pfam" id="PF02911">
    <property type="entry name" value="Formyl_trans_C"/>
    <property type="match status" value="1"/>
</dbReference>
<dbReference type="Pfam" id="PF00551">
    <property type="entry name" value="Formyl_trans_N"/>
    <property type="match status" value="1"/>
</dbReference>
<dbReference type="SUPFAM" id="SSF50486">
    <property type="entry name" value="FMT C-terminal domain-like"/>
    <property type="match status" value="1"/>
</dbReference>
<dbReference type="SUPFAM" id="SSF53328">
    <property type="entry name" value="Formyltransferase"/>
    <property type="match status" value="1"/>
</dbReference>
<dbReference type="PROSITE" id="PS00373">
    <property type="entry name" value="GART"/>
    <property type="match status" value="1"/>
</dbReference>
<name>FMT_FRATO</name>
<comment type="function">
    <text evidence="1">Attaches a formyl group to the free amino group of methionyl-tRNA(fMet). The formyl group appears to play a dual role in the initiator identity of N-formylmethionyl-tRNA by promoting its recognition by IF2 and preventing the misappropriation of this tRNA by the elongation apparatus.</text>
</comment>
<comment type="catalytic activity">
    <reaction evidence="1">
        <text>L-methionyl-tRNA(fMet) + (6R)-10-formyltetrahydrofolate = N-formyl-L-methionyl-tRNA(fMet) + (6S)-5,6,7,8-tetrahydrofolate + H(+)</text>
        <dbReference type="Rhea" id="RHEA:24380"/>
        <dbReference type="Rhea" id="RHEA-COMP:9952"/>
        <dbReference type="Rhea" id="RHEA-COMP:9953"/>
        <dbReference type="ChEBI" id="CHEBI:15378"/>
        <dbReference type="ChEBI" id="CHEBI:57453"/>
        <dbReference type="ChEBI" id="CHEBI:78530"/>
        <dbReference type="ChEBI" id="CHEBI:78844"/>
        <dbReference type="ChEBI" id="CHEBI:195366"/>
        <dbReference type="EC" id="2.1.2.9"/>
    </reaction>
</comment>
<comment type="similarity">
    <text evidence="1">Belongs to the Fmt family.</text>
</comment>